<organism>
    <name type="scientific">Solibacter usitatus (strain Ellin6076)</name>
    <dbReference type="NCBI Taxonomy" id="234267"/>
    <lineage>
        <taxon>Bacteria</taxon>
        <taxon>Pseudomonadati</taxon>
        <taxon>Acidobacteriota</taxon>
        <taxon>Terriglobia</taxon>
        <taxon>Bryobacterales</taxon>
        <taxon>Solibacteraceae</taxon>
        <taxon>Candidatus Solibacter</taxon>
    </lineage>
</organism>
<name>SYFB_SOLUE</name>
<protein>
    <recommendedName>
        <fullName evidence="1">Phenylalanine--tRNA ligase beta subunit</fullName>
        <ecNumber evidence="1">6.1.1.20</ecNumber>
    </recommendedName>
    <alternativeName>
        <fullName evidence="1">Phenylalanyl-tRNA synthetase beta subunit</fullName>
        <shortName evidence="1">PheRS</shortName>
    </alternativeName>
</protein>
<feature type="chain" id="PRO_1000078860" description="Phenylalanine--tRNA ligase beta subunit">
    <location>
        <begin position="1"/>
        <end position="769"/>
    </location>
</feature>
<feature type="domain" description="tRNA-binding" evidence="1">
    <location>
        <begin position="40"/>
        <end position="141"/>
    </location>
</feature>
<feature type="domain" description="B5" evidence="1">
    <location>
        <begin position="389"/>
        <end position="467"/>
    </location>
</feature>
<feature type="domain" description="FDX-ACB" evidence="1">
    <location>
        <begin position="676"/>
        <end position="768"/>
    </location>
</feature>
<feature type="binding site" evidence="1">
    <location>
        <position position="445"/>
    </location>
    <ligand>
        <name>Mg(2+)</name>
        <dbReference type="ChEBI" id="CHEBI:18420"/>
        <note>shared with alpha subunit</note>
    </ligand>
</feature>
<feature type="binding site" evidence="1">
    <location>
        <position position="451"/>
    </location>
    <ligand>
        <name>Mg(2+)</name>
        <dbReference type="ChEBI" id="CHEBI:18420"/>
        <note>shared with alpha subunit</note>
    </ligand>
</feature>
<feature type="binding site" evidence="1">
    <location>
        <position position="454"/>
    </location>
    <ligand>
        <name>Mg(2+)</name>
        <dbReference type="ChEBI" id="CHEBI:18420"/>
        <note>shared with alpha subunit</note>
    </ligand>
</feature>
<feature type="binding site" evidence="1">
    <location>
        <position position="455"/>
    </location>
    <ligand>
        <name>Mg(2+)</name>
        <dbReference type="ChEBI" id="CHEBI:18420"/>
        <note>shared with alpha subunit</note>
    </ligand>
</feature>
<reference key="1">
    <citation type="journal article" date="2009" name="Appl. Environ. Microbiol.">
        <title>Three genomes from the phylum Acidobacteria provide insight into the lifestyles of these microorganisms in soils.</title>
        <authorList>
            <person name="Ward N.L."/>
            <person name="Challacombe J.F."/>
            <person name="Janssen P.H."/>
            <person name="Henrissat B."/>
            <person name="Coutinho P.M."/>
            <person name="Wu M."/>
            <person name="Xie G."/>
            <person name="Haft D.H."/>
            <person name="Sait M."/>
            <person name="Badger J."/>
            <person name="Barabote R.D."/>
            <person name="Bradley B."/>
            <person name="Brettin T.S."/>
            <person name="Brinkac L.M."/>
            <person name="Bruce D."/>
            <person name="Creasy T."/>
            <person name="Daugherty S.C."/>
            <person name="Davidsen T.M."/>
            <person name="DeBoy R.T."/>
            <person name="Detter J.C."/>
            <person name="Dodson R.J."/>
            <person name="Durkin A.S."/>
            <person name="Ganapathy A."/>
            <person name="Gwinn-Giglio M."/>
            <person name="Han C.S."/>
            <person name="Khouri H."/>
            <person name="Kiss H."/>
            <person name="Kothari S.P."/>
            <person name="Madupu R."/>
            <person name="Nelson K.E."/>
            <person name="Nelson W.C."/>
            <person name="Paulsen I."/>
            <person name="Penn K."/>
            <person name="Ren Q."/>
            <person name="Rosovitz M.J."/>
            <person name="Selengut J.D."/>
            <person name="Shrivastava S."/>
            <person name="Sullivan S.A."/>
            <person name="Tapia R."/>
            <person name="Thompson L.S."/>
            <person name="Watkins K.L."/>
            <person name="Yang Q."/>
            <person name="Yu C."/>
            <person name="Zafar N."/>
            <person name="Zhou L."/>
            <person name="Kuske C.R."/>
        </authorList>
    </citation>
    <scope>NUCLEOTIDE SEQUENCE [LARGE SCALE GENOMIC DNA]</scope>
    <source>
        <strain>Ellin6076</strain>
    </source>
</reference>
<keyword id="KW-0030">Aminoacyl-tRNA synthetase</keyword>
<keyword id="KW-0067">ATP-binding</keyword>
<keyword id="KW-0963">Cytoplasm</keyword>
<keyword id="KW-0436">Ligase</keyword>
<keyword id="KW-0460">Magnesium</keyword>
<keyword id="KW-0479">Metal-binding</keyword>
<keyword id="KW-0547">Nucleotide-binding</keyword>
<keyword id="KW-0648">Protein biosynthesis</keyword>
<keyword id="KW-0694">RNA-binding</keyword>
<keyword id="KW-0820">tRNA-binding</keyword>
<accession>Q01SP7</accession>
<sequence>MKFSYNWIREFVPGLTQAAAPLERLITMKTAECEGIEEEGKLLTIARVARVETVEPIPDSHNVKAVVDAGPLGRKTVVCGAPNCRPGILTAYAPIGRKVVSGVESDGMLASGAELGINKDHDGIVELNAPLGEPIPGCEPDAAIEIDNKSITHRPDLWGHHGMAREVAAILGLPLTDHAKLDLLPEGVPAIRVQIEDLALCPRYSALVFENVTVQPSPLWLQYRLTAIGLNPINNIVDMTNFVMAELAQPMHAFDADLLKGDTIFVRPAKAGEYFVALNDEEYTLDPSNLVIADASGAIALAGVIGGKGSAIGDTTTRVVLESANFQASSVRKTSSAIKLRTDASMRFEKAQDPSNTVRGLARAIELLREISPGIRLVGGVADQRREIPAPPPIELPLAWLQRKLGRAIEASEVRRILESLAFGVSEPTPGVFSVTVPSWRATKDISIKDDLVEEVGRMIGYDSIAPQAPLVPASVPPGNPSRRFQHDVRNLFVDNGFTEVYNYSFLSEASVRAFGFDSASMIRVTNPIASDQELMRSSLLPGIWRNVTENAKHHESFRLFEIGLEIHRRDTGLPNEIPHLIAAYYDRQGDGQPGLFELKRLARCLMPNAQTVPAAAREFEHTARAAEIQVAGQTVGRLFELHPKLVETGRAAILDLDLRLVQSLTAGETRYTPIRRYPSSAFDLSVLAGLREQAGTLQAAIASFAGPLQESIQFVRQYVGPPLADGVKSVSFRLTVGSPERTLSSEEITAVRNAIIEGMRAKGYELRV</sequence>
<gene>
    <name evidence="1" type="primary">pheT</name>
    <name type="ordered locus">Acid_6397</name>
</gene>
<comment type="catalytic activity">
    <reaction evidence="1">
        <text>tRNA(Phe) + L-phenylalanine + ATP = L-phenylalanyl-tRNA(Phe) + AMP + diphosphate + H(+)</text>
        <dbReference type="Rhea" id="RHEA:19413"/>
        <dbReference type="Rhea" id="RHEA-COMP:9668"/>
        <dbReference type="Rhea" id="RHEA-COMP:9699"/>
        <dbReference type="ChEBI" id="CHEBI:15378"/>
        <dbReference type="ChEBI" id="CHEBI:30616"/>
        <dbReference type="ChEBI" id="CHEBI:33019"/>
        <dbReference type="ChEBI" id="CHEBI:58095"/>
        <dbReference type="ChEBI" id="CHEBI:78442"/>
        <dbReference type="ChEBI" id="CHEBI:78531"/>
        <dbReference type="ChEBI" id="CHEBI:456215"/>
        <dbReference type="EC" id="6.1.1.20"/>
    </reaction>
</comment>
<comment type="cofactor">
    <cofactor evidence="1">
        <name>Mg(2+)</name>
        <dbReference type="ChEBI" id="CHEBI:18420"/>
    </cofactor>
    <text evidence="1">Binds 2 magnesium ions per tetramer.</text>
</comment>
<comment type="subunit">
    <text evidence="1">Tetramer of two alpha and two beta subunits.</text>
</comment>
<comment type="subcellular location">
    <subcellularLocation>
        <location evidence="1">Cytoplasm</location>
    </subcellularLocation>
</comment>
<comment type="similarity">
    <text evidence="1">Belongs to the phenylalanyl-tRNA synthetase beta subunit family. Type 1 subfamily.</text>
</comment>
<proteinExistence type="inferred from homology"/>
<dbReference type="EC" id="6.1.1.20" evidence="1"/>
<dbReference type="EMBL" id="CP000473">
    <property type="protein sequence ID" value="ABJ87323.1"/>
    <property type="molecule type" value="Genomic_DNA"/>
</dbReference>
<dbReference type="SMR" id="Q01SP7"/>
<dbReference type="FunCoup" id="Q01SP7">
    <property type="interactions" value="524"/>
</dbReference>
<dbReference type="STRING" id="234267.Acid_6397"/>
<dbReference type="KEGG" id="sus:Acid_6397"/>
<dbReference type="eggNOG" id="COG0072">
    <property type="taxonomic scope" value="Bacteria"/>
</dbReference>
<dbReference type="eggNOG" id="COG0073">
    <property type="taxonomic scope" value="Bacteria"/>
</dbReference>
<dbReference type="HOGENOM" id="CLU_016891_0_0_0"/>
<dbReference type="InParanoid" id="Q01SP7"/>
<dbReference type="OrthoDB" id="9805455at2"/>
<dbReference type="GO" id="GO:0009328">
    <property type="term" value="C:phenylalanine-tRNA ligase complex"/>
    <property type="evidence" value="ECO:0007669"/>
    <property type="project" value="TreeGrafter"/>
</dbReference>
<dbReference type="GO" id="GO:0005524">
    <property type="term" value="F:ATP binding"/>
    <property type="evidence" value="ECO:0007669"/>
    <property type="project" value="UniProtKB-UniRule"/>
</dbReference>
<dbReference type="GO" id="GO:0000287">
    <property type="term" value="F:magnesium ion binding"/>
    <property type="evidence" value="ECO:0007669"/>
    <property type="project" value="UniProtKB-UniRule"/>
</dbReference>
<dbReference type="GO" id="GO:0004826">
    <property type="term" value="F:phenylalanine-tRNA ligase activity"/>
    <property type="evidence" value="ECO:0007669"/>
    <property type="project" value="UniProtKB-UniRule"/>
</dbReference>
<dbReference type="GO" id="GO:0000049">
    <property type="term" value="F:tRNA binding"/>
    <property type="evidence" value="ECO:0007669"/>
    <property type="project" value="UniProtKB-KW"/>
</dbReference>
<dbReference type="GO" id="GO:0006432">
    <property type="term" value="P:phenylalanyl-tRNA aminoacylation"/>
    <property type="evidence" value="ECO:0007669"/>
    <property type="project" value="UniProtKB-UniRule"/>
</dbReference>
<dbReference type="CDD" id="cd02796">
    <property type="entry name" value="tRNA_bind_bactPheRS"/>
    <property type="match status" value="1"/>
</dbReference>
<dbReference type="Gene3D" id="3.30.56.10">
    <property type="match status" value="2"/>
</dbReference>
<dbReference type="Gene3D" id="3.30.930.10">
    <property type="entry name" value="Bira Bifunctional Protein, Domain 2"/>
    <property type="match status" value="1"/>
</dbReference>
<dbReference type="Gene3D" id="3.30.70.380">
    <property type="entry name" value="Ferrodoxin-fold anticodon-binding domain"/>
    <property type="match status" value="1"/>
</dbReference>
<dbReference type="Gene3D" id="2.40.50.140">
    <property type="entry name" value="Nucleic acid-binding proteins"/>
    <property type="match status" value="1"/>
</dbReference>
<dbReference type="Gene3D" id="3.50.40.10">
    <property type="entry name" value="Phenylalanyl-trna Synthetase, Chain B, domain 3"/>
    <property type="match status" value="1"/>
</dbReference>
<dbReference type="HAMAP" id="MF_00283">
    <property type="entry name" value="Phe_tRNA_synth_beta1"/>
    <property type="match status" value="1"/>
</dbReference>
<dbReference type="InterPro" id="IPR045864">
    <property type="entry name" value="aa-tRNA-synth_II/BPL/LPL"/>
</dbReference>
<dbReference type="InterPro" id="IPR005146">
    <property type="entry name" value="B3/B4_tRNA-bd"/>
</dbReference>
<dbReference type="InterPro" id="IPR009061">
    <property type="entry name" value="DNA-bd_dom_put_sf"/>
</dbReference>
<dbReference type="InterPro" id="IPR005121">
    <property type="entry name" value="Fdx_antiC-bd"/>
</dbReference>
<dbReference type="InterPro" id="IPR036690">
    <property type="entry name" value="Fdx_antiC-bd_sf"/>
</dbReference>
<dbReference type="InterPro" id="IPR012340">
    <property type="entry name" value="NA-bd_OB-fold"/>
</dbReference>
<dbReference type="InterPro" id="IPR045060">
    <property type="entry name" value="Phe-tRNA-ligase_IIc_bsu"/>
</dbReference>
<dbReference type="InterPro" id="IPR004532">
    <property type="entry name" value="Phe-tRNA-ligase_IIc_bsu_bact"/>
</dbReference>
<dbReference type="InterPro" id="IPR020825">
    <property type="entry name" value="Phe-tRNA_synthase-like_B3/B4"/>
</dbReference>
<dbReference type="InterPro" id="IPR041616">
    <property type="entry name" value="PheRS_beta_core"/>
</dbReference>
<dbReference type="InterPro" id="IPR002547">
    <property type="entry name" value="tRNA-bd_dom"/>
</dbReference>
<dbReference type="InterPro" id="IPR033714">
    <property type="entry name" value="tRNA_bind_bactPheRS"/>
</dbReference>
<dbReference type="InterPro" id="IPR005147">
    <property type="entry name" value="tRNA_synthase_B5-dom"/>
</dbReference>
<dbReference type="NCBIfam" id="TIGR00472">
    <property type="entry name" value="pheT_bact"/>
    <property type="match status" value="1"/>
</dbReference>
<dbReference type="PANTHER" id="PTHR10947:SF0">
    <property type="entry name" value="PHENYLALANINE--TRNA LIGASE BETA SUBUNIT"/>
    <property type="match status" value="1"/>
</dbReference>
<dbReference type="PANTHER" id="PTHR10947">
    <property type="entry name" value="PHENYLALANYL-TRNA SYNTHETASE BETA CHAIN AND LEUCINE-RICH REPEAT-CONTAINING PROTEIN 47"/>
    <property type="match status" value="1"/>
</dbReference>
<dbReference type="Pfam" id="PF03483">
    <property type="entry name" value="B3_4"/>
    <property type="match status" value="1"/>
</dbReference>
<dbReference type="Pfam" id="PF03484">
    <property type="entry name" value="B5"/>
    <property type="match status" value="1"/>
</dbReference>
<dbReference type="Pfam" id="PF03147">
    <property type="entry name" value="FDX-ACB"/>
    <property type="match status" value="1"/>
</dbReference>
<dbReference type="Pfam" id="PF01588">
    <property type="entry name" value="tRNA_bind"/>
    <property type="match status" value="1"/>
</dbReference>
<dbReference type="Pfam" id="PF17759">
    <property type="entry name" value="tRNA_synthFbeta"/>
    <property type="match status" value="1"/>
</dbReference>
<dbReference type="SMART" id="SM00873">
    <property type="entry name" value="B3_4"/>
    <property type="match status" value="1"/>
</dbReference>
<dbReference type="SMART" id="SM00874">
    <property type="entry name" value="B5"/>
    <property type="match status" value="1"/>
</dbReference>
<dbReference type="SMART" id="SM00896">
    <property type="entry name" value="FDX-ACB"/>
    <property type="match status" value="1"/>
</dbReference>
<dbReference type="SUPFAM" id="SSF54991">
    <property type="entry name" value="Anticodon-binding domain of PheRS"/>
    <property type="match status" value="1"/>
</dbReference>
<dbReference type="SUPFAM" id="SSF55681">
    <property type="entry name" value="Class II aaRS and biotin synthetases"/>
    <property type="match status" value="1"/>
</dbReference>
<dbReference type="SUPFAM" id="SSF50249">
    <property type="entry name" value="Nucleic acid-binding proteins"/>
    <property type="match status" value="1"/>
</dbReference>
<dbReference type="SUPFAM" id="SSF56037">
    <property type="entry name" value="PheT/TilS domain"/>
    <property type="match status" value="1"/>
</dbReference>
<dbReference type="SUPFAM" id="SSF46955">
    <property type="entry name" value="Putative DNA-binding domain"/>
    <property type="match status" value="1"/>
</dbReference>
<dbReference type="PROSITE" id="PS51483">
    <property type="entry name" value="B5"/>
    <property type="match status" value="1"/>
</dbReference>
<dbReference type="PROSITE" id="PS51447">
    <property type="entry name" value="FDX_ACB"/>
    <property type="match status" value="1"/>
</dbReference>
<dbReference type="PROSITE" id="PS50886">
    <property type="entry name" value="TRBD"/>
    <property type="match status" value="1"/>
</dbReference>
<evidence type="ECO:0000255" key="1">
    <source>
        <dbReference type="HAMAP-Rule" id="MF_00283"/>
    </source>
</evidence>